<keyword id="KW-0687">Ribonucleoprotein</keyword>
<keyword id="KW-0689">Ribosomal protein</keyword>
<keyword id="KW-0694">RNA-binding</keyword>
<keyword id="KW-0699">rRNA-binding</keyword>
<sequence length="122" mass="13061">MIQQETRLKVADNSGAREILTIKVLGGSGRKFANIGDVIVASVKQATPGGAVKKGDVVKAVIVRTKTGARRPDGSYIKFDDNAAVIIRDDKTPRGTRIFGPVARELREGGYMKIVSLAPEVL</sequence>
<gene>
    <name evidence="1" type="primary">rplN</name>
    <name type="ordered locus">spyM18_0062</name>
</gene>
<name>RL14_STRP8</name>
<comment type="function">
    <text evidence="1">Binds to 23S rRNA. Forms part of two intersubunit bridges in the 70S ribosome.</text>
</comment>
<comment type="subunit">
    <text evidence="1">Part of the 50S ribosomal subunit. Forms a cluster with proteins L3 and L19. In the 70S ribosome, L14 and L19 interact and together make contacts with the 16S rRNA in bridges B5 and B8.</text>
</comment>
<comment type="similarity">
    <text evidence="1">Belongs to the universal ribosomal protein uL14 family.</text>
</comment>
<accession>Q7CNP7</accession>
<feature type="chain" id="PRO_1000055718" description="Large ribosomal subunit protein uL14">
    <location>
        <begin position="1"/>
        <end position="122"/>
    </location>
</feature>
<protein>
    <recommendedName>
        <fullName evidence="1">Large ribosomal subunit protein uL14</fullName>
    </recommendedName>
    <alternativeName>
        <fullName evidence="2">50S ribosomal protein L14</fullName>
    </alternativeName>
</protein>
<proteinExistence type="inferred from homology"/>
<dbReference type="EMBL" id="AE009949">
    <property type="protein sequence ID" value="AAL96886.1"/>
    <property type="molecule type" value="Genomic_DNA"/>
</dbReference>
<dbReference type="RefSeq" id="WP_000615920.1">
    <property type="nucleotide sequence ID" value="NC_003485.1"/>
</dbReference>
<dbReference type="SMR" id="Q7CNP7"/>
<dbReference type="GeneID" id="83689563"/>
<dbReference type="KEGG" id="spm:spyM18_0062"/>
<dbReference type="HOGENOM" id="CLU_095071_2_1_9"/>
<dbReference type="GO" id="GO:0022625">
    <property type="term" value="C:cytosolic large ribosomal subunit"/>
    <property type="evidence" value="ECO:0007669"/>
    <property type="project" value="TreeGrafter"/>
</dbReference>
<dbReference type="GO" id="GO:0070180">
    <property type="term" value="F:large ribosomal subunit rRNA binding"/>
    <property type="evidence" value="ECO:0007669"/>
    <property type="project" value="TreeGrafter"/>
</dbReference>
<dbReference type="GO" id="GO:0003735">
    <property type="term" value="F:structural constituent of ribosome"/>
    <property type="evidence" value="ECO:0007669"/>
    <property type="project" value="InterPro"/>
</dbReference>
<dbReference type="GO" id="GO:0006412">
    <property type="term" value="P:translation"/>
    <property type="evidence" value="ECO:0007669"/>
    <property type="project" value="UniProtKB-UniRule"/>
</dbReference>
<dbReference type="CDD" id="cd00337">
    <property type="entry name" value="Ribosomal_uL14"/>
    <property type="match status" value="1"/>
</dbReference>
<dbReference type="FunFam" id="2.40.150.20:FF:000001">
    <property type="entry name" value="50S ribosomal protein L14"/>
    <property type="match status" value="1"/>
</dbReference>
<dbReference type="Gene3D" id="2.40.150.20">
    <property type="entry name" value="Ribosomal protein L14"/>
    <property type="match status" value="1"/>
</dbReference>
<dbReference type="HAMAP" id="MF_01367">
    <property type="entry name" value="Ribosomal_uL14"/>
    <property type="match status" value="1"/>
</dbReference>
<dbReference type="InterPro" id="IPR000218">
    <property type="entry name" value="Ribosomal_uL14"/>
</dbReference>
<dbReference type="InterPro" id="IPR005745">
    <property type="entry name" value="Ribosomal_uL14_bac-type"/>
</dbReference>
<dbReference type="InterPro" id="IPR019972">
    <property type="entry name" value="Ribosomal_uL14_CS"/>
</dbReference>
<dbReference type="InterPro" id="IPR036853">
    <property type="entry name" value="Ribosomal_uL14_sf"/>
</dbReference>
<dbReference type="NCBIfam" id="TIGR01067">
    <property type="entry name" value="rplN_bact"/>
    <property type="match status" value="1"/>
</dbReference>
<dbReference type="PANTHER" id="PTHR11761">
    <property type="entry name" value="50S/60S RIBOSOMAL PROTEIN L14/L23"/>
    <property type="match status" value="1"/>
</dbReference>
<dbReference type="PANTHER" id="PTHR11761:SF3">
    <property type="entry name" value="LARGE RIBOSOMAL SUBUNIT PROTEIN UL14M"/>
    <property type="match status" value="1"/>
</dbReference>
<dbReference type="Pfam" id="PF00238">
    <property type="entry name" value="Ribosomal_L14"/>
    <property type="match status" value="1"/>
</dbReference>
<dbReference type="SMART" id="SM01374">
    <property type="entry name" value="Ribosomal_L14"/>
    <property type="match status" value="1"/>
</dbReference>
<dbReference type="SUPFAM" id="SSF50193">
    <property type="entry name" value="Ribosomal protein L14"/>
    <property type="match status" value="1"/>
</dbReference>
<dbReference type="PROSITE" id="PS00049">
    <property type="entry name" value="RIBOSOMAL_L14"/>
    <property type="match status" value="1"/>
</dbReference>
<reference key="1">
    <citation type="journal article" date="2002" name="Proc. Natl. Acad. Sci. U.S.A.">
        <title>Genome sequence and comparative microarray analysis of serotype M18 group A Streptococcus strains associated with acute rheumatic fever outbreaks.</title>
        <authorList>
            <person name="Smoot J.C."/>
            <person name="Barbian K.D."/>
            <person name="Van Gompel J.J."/>
            <person name="Smoot L.M."/>
            <person name="Chaussee M.S."/>
            <person name="Sylva G.L."/>
            <person name="Sturdevant D.E."/>
            <person name="Ricklefs S.M."/>
            <person name="Porcella S.F."/>
            <person name="Parkins L.D."/>
            <person name="Beres S.B."/>
            <person name="Campbell D.S."/>
            <person name="Smith T.M."/>
            <person name="Zhang Q."/>
            <person name="Kapur V."/>
            <person name="Daly J.A."/>
            <person name="Veasy L.G."/>
            <person name="Musser J.M."/>
        </authorList>
    </citation>
    <scope>NUCLEOTIDE SEQUENCE [LARGE SCALE GENOMIC DNA]</scope>
    <source>
        <strain>MGAS8232</strain>
    </source>
</reference>
<organism>
    <name type="scientific">Streptococcus pyogenes serotype M18 (strain MGAS8232)</name>
    <dbReference type="NCBI Taxonomy" id="186103"/>
    <lineage>
        <taxon>Bacteria</taxon>
        <taxon>Bacillati</taxon>
        <taxon>Bacillota</taxon>
        <taxon>Bacilli</taxon>
        <taxon>Lactobacillales</taxon>
        <taxon>Streptococcaceae</taxon>
        <taxon>Streptococcus</taxon>
    </lineage>
</organism>
<evidence type="ECO:0000255" key="1">
    <source>
        <dbReference type="HAMAP-Rule" id="MF_01367"/>
    </source>
</evidence>
<evidence type="ECO:0000305" key="2"/>